<name>FFKA_ANTEL</name>
<sequence>FFKA</sequence>
<feature type="peptide" id="PRO_0000043714" description="Antho-KAamide">
    <location>
        <begin position="1"/>
        <end position="4"/>
    </location>
</feature>
<feature type="modified residue" description="3-phenyllactic acid" evidence="1">
    <location>
        <position position="1"/>
    </location>
</feature>
<feature type="modified residue" description="Alanine amide" evidence="1">
    <location>
        <position position="4"/>
    </location>
</feature>
<dbReference type="PIR" id="JQ1273">
    <property type="entry name" value="JQ1273"/>
</dbReference>
<dbReference type="GO" id="GO:0005576">
    <property type="term" value="C:extracellular region"/>
    <property type="evidence" value="ECO:0007669"/>
    <property type="project" value="UniProtKB-SubCell"/>
</dbReference>
<dbReference type="GO" id="GO:0007218">
    <property type="term" value="P:neuropeptide signaling pathway"/>
    <property type="evidence" value="ECO:0007669"/>
    <property type="project" value="UniProtKB-KW"/>
</dbReference>
<reference key="1">
    <citation type="journal article" date="1991" name="Biochem. Biophys. Res. Commun.">
        <title>Isolation of L-3-phenyllactyl-Phe-Lys-Ala-NH2 (Antho-KAamide), a novel neuropeptide from sea anemones.</title>
        <authorList>
            <person name="Nothacker H.-P."/>
            <person name="Rinehart K.L. Jr."/>
            <person name="Grimmelikhuijzen C.J.P."/>
        </authorList>
    </citation>
    <scope>PROTEIN SEQUENCE</scope>
    <scope>AMIDATION AT ALA-4</scope>
</reference>
<reference key="2">
    <citation type="journal article" date="1993" name="Proc. R. Soc. B">
        <title>The expansion behaviour of sea anemones may be coordinated by two inhibitory neuropeptides, Antho-KAamide and Antho-RIamide.</title>
        <authorList>
            <person name="McFarlane I.D."/>
            <person name="Hudman D."/>
            <person name="Nothacker H.-P."/>
            <person name="Grimmelikhuijzen C.J.P."/>
        </authorList>
    </citation>
    <scope>FUNCTION</scope>
</reference>
<keyword id="KW-0027">Amidation</keyword>
<keyword id="KW-0903">Direct protein sequencing</keyword>
<keyword id="KW-0527">Neuropeptide</keyword>
<keyword id="KW-0964">Secreted</keyword>
<proteinExistence type="evidence at protein level"/>
<evidence type="ECO:0000269" key="1">
    <source>
    </source>
</evidence>
<evidence type="ECO:0000269" key="2">
    <source>
    </source>
</evidence>
<organism>
    <name type="scientific">Anthopleura elegantissima</name>
    <name type="common">Green aggregating anemone</name>
    <name type="synonym">Actinia elegantissima</name>
    <dbReference type="NCBI Taxonomy" id="6110"/>
    <lineage>
        <taxon>Eukaryota</taxon>
        <taxon>Metazoa</taxon>
        <taxon>Cnidaria</taxon>
        <taxon>Anthozoa</taxon>
        <taxon>Hexacorallia</taxon>
        <taxon>Actiniaria</taxon>
        <taxon>Actiniidae</taxon>
        <taxon>Anthopleura</taxon>
    </lineage>
</organism>
<accession>P58705</accession>
<protein>
    <recommendedName>
        <fullName>Antho-KAamide</fullName>
    </recommendedName>
</protein>
<comment type="function">
    <text evidence="2">Inhibits spontaneous contractions in several muscle groups. May be involved in the expansion phase of feeding behavior in sea anemones.</text>
</comment>
<comment type="subcellular location">
    <subcellularLocation>
        <location>Secreted</location>
    </subcellularLocation>
</comment>
<comment type="tissue specificity">
    <text>Neuron specific.</text>
</comment>